<sequence>MALKHYKNSDSTVFNDAKALFDLNKNILLKGPTGSGKTKLAETLSEVVDTPMHQVNCSVDLDTESLLGFKTIKTNAEGQQEIVFVDGPVIKAMKEGHILYIDEINMAKPETLPVLNGVLDYRRQITNPYTGEVIKAVPGFNVIAAINEGYVGTLPMNEALKNRFVVIHVDYIDGDILKNVIKEQSLLQDDKQIEQIIKFNEDLRTMSKQGQISEEAASIRALLDLCDLITVMPVERAIKRTIIDKLEDEREQQAIYNAVELNF</sequence>
<evidence type="ECO:0000255" key="1"/>
<evidence type="ECO:0000305" key="2"/>
<organism>
    <name type="scientific">Staphylococcus aureus (strain MW2)</name>
    <dbReference type="NCBI Taxonomy" id="196620"/>
    <lineage>
        <taxon>Bacteria</taxon>
        <taxon>Bacillati</taxon>
        <taxon>Bacillota</taxon>
        <taxon>Bacilli</taxon>
        <taxon>Bacillales</taxon>
        <taxon>Staphylococcaceae</taxon>
        <taxon>Staphylococcus</taxon>
    </lineage>
</organism>
<name>Y1299_STAAW</name>
<reference key="1">
    <citation type="journal article" date="2002" name="Lancet">
        <title>Genome and virulence determinants of high virulence community-acquired MRSA.</title>
        <authorList>
            <person name="Baba T."/>
            <person name="Takeuchi F."/>
            <person name="Kuroda M."/>
            <person name="Yuzawa H."/>
            <person name="Aoki K."/>
            <person name="Oguchi A."/>
            <person name="Nagai Y."/>
            <person name="Iwama N."/>
            <person name="Asano K."/>
            <person name="Naimi T."/>
            <person name="Kuroda H."/>
            <person name="Cui L."/>
            <person name="Yamamoto K."/>
            <person name="Hiramatsu K."/>
        </authorList>
    </citation>
    <scope>NUCLEOTIDE SEQUENCE [LARGE SCALE GENOMIC DNA]</scope>
    <source>
        <strain>MW2</strain>
    </source>
</reference>
<accession>Q7A0W8</accession>
<keyword id="KW-0067">ATP-binding</keyword>
<keyword id="KW-0547">Nucleotide-binding</keyword>
<comment type="similarity">
    <text evidence="2">Belongs to the CbbQ/NirQ/NorQ/GpvN family.</text>
</comment>
<feature type="chain" id="PRO_0000284810" description="Uncharacterized protein MW1299">
    <location>
        <begin position="1"/>
        <end position="263"/>
    </location>
</feature>
<feature type="binding site" evidence="1">
    <location>
        <begin position="31"/>
        <end position="38"/>
    </location>
    <ligand>
        <name>ATP</name>
        <dbReference type="ChEBI" id="CHEBI:30616"/>
    </ligand>
</feature>
<gene>
    <name type="ordered locus">MW1299</name>
</gene>
<proteinExistence type="inferred from homology"/>
<dbReference type="EMBL" id="BA000033">
    <property type="protein sequence ID" value="BAB95164.1"/>
    <property type="molecule type" value="Genomic_DNA"/>
</dbReference>
<dbReference type="RefSeq" id="WP_001185421.1">
    <property type="nucleotide sequence ID" value="NC_003923.1"/>
</dbReference>
<dbReference type="SMR" id="Q7A0W8"/>
<dbReference type="KEGG" id="sam:MW1299"/>
<dbReference type="HOGENOM" id="CLU_080347_0_0_9"/>
<dbReference type="GO" id="GO:0005524">
    <property type="term" value="F:ATP binding"/>
    <property type="evidence" value="ECO:0007669"/>
    <property type="project" value="UniProtKB-KW"/>
</dbReference>
<dbReference type="GO" id="GO:0016887">
    <property type="term" value="F:ATP hydrolysis activity"/>
    <property type="evidence" value="ECO:0007669"/>
    <property type="project" value="InterPro"/>
</dbReference>
<dbReference type="CDD" id="cd00009">
    <property type="entry name" value="AAA"/>
    <property type="match status" value="1"/>
</dbReference>
<dbReference type="Gene3D" id="3.40.50.300">
    <property type="entry name" value="P-loop containing nucleotide triphosphate hydrolases"/>
    <property type="match status" value="1"/>
</dbReference>
<dbReference type="InterPro" id="IPR011704">
    <property type="entry name" value="ATPase_dyneun-rel_AAA"/>
</dbReference>
<dbReference type="InterPro" id="IPR050764">
    <property type="entry name" value="CbbQ/NirQ/NorQ/GpvN"/>
</dbReference>
<dbReference type="InterPro" id="IPR013615">
    <property type="entry name" value="CbbQ_C"/>
</dbReference>
<dbReference type="InterPro" id="IPR001270">
    <property type="entry name" value="ClpA/B"/>
</dbReference>
<dbReference type="InterPro" id="IPR027417">
    <property type="entry name" value="P-loop_NTPase"/>
</dbReference>
<dbReference type="PANTHER" id="PTHR42759:SF1">
    <property type="entry name" value="MAGNESIUM-CHELATASE SUBUNIT CHLD"/>
    <property type="match status" value="1"/>
</dbReference>
<dbReference type="PANTHER" id="PTHR42759">
    <property type="entry name" value="MOXR FAMILY PROTEIN"/>
    <property type="match status" value="1"/>
</dbReference>
<dbReference type="Pfam" id="PF07728">
    <property type="entry name" value="AAA_5"/>
    <property type="match status" value="1"/>
</dbReference>
<dbReference type="Pfam" id="PF08406">
    <property type="entry name" value="CbbQ_C"/>
    <property type="match status" value="1"/>
</dbReference>
<dbReference type="PRINTS" id="PR00300">
    <property type="entry name" value="CLPPROTEASEA"/>
</dbReference>
<dbReference type="SUPFAM" id="SSF52540">
    <property type="entry name" value="P-loop containing nucleoside triphosphate hydrolases"/>
    <property type="match status" value="1"/>
</dbReference>
<protein>
    <recommendedName>
        <fullName>Uncharacterized protein MW1299</fullName>
    </recommendedName>
</protein>